<feature type="peptide" id="PRO_0000044703" description="Cycloviolacin-O6">
    <location>
        <begin position="1"/>
        <end position="31"/>
    </location>
</feature>
<feature type="disulfide bond">
    <location>
        <begin position="5"/>
        <end position="21"/>
    </location>
</feature>
<feature type="disulfide bond">
    <location>
        <begin position="9"/>
        <end position="23"/>
    </location>
</feature>
<feature type="disulfide bond">
    <location>
        <begin position="14"/>
        <end position="28"/>
    </location>
</feature>
<feature type="cross-link" description="Cyclopeptide (Gly-Asn)">
    <location>
        <begin position="1"/>
        <end position="31"/>
    </location>
</feature>
<feature type="sequence conflict" description="In Ref. 2; AA sequence." evidence="3" ref="2">
    <original>C</original>
    <variation>V</variation>
    <location>
        <position position="14"/>
    </location>
</feature>
<dbReference type="SMR" id="P58438"/>
<dbReference type="GO" id="GO:0006952">
    <property type="term" value="P:defense response"/>
    <property type="evidence" value="ECO:0000250"/>
    <property type="project" value="UniProtKB"/>
</dbReference>
<dbReference type="InterPro" id="IPR005535">
    <property type="entry name" value="Cyclotide"/>
</dbReference>
<dbReference type="InterPro" id="IPR012323">
    <property type="entry name" value="Cyclotide_bracelet_CS"/>
</dbReference>
<dbReference type="InterPro" id="IPR036146">
    <property type="entry name" value="Cyclotide_sf"/>
</dbReference>
<dbReference type="Pfam" id="PF03784">
    <property type="entry name" value="Cyclotide"/>
    <property type="match status" value="1"/>
</dbReference>
<dbReference type="PIRSF" id="PIRSF037891">
    <property type="entry name" value="Cycloviolacin"/>
    <property type="match status" value="1"/>
</dbReference>
<dbReference type="SUPFAM" id="SSF57038">
    <property type="entry name" value="Cyclotides"/>
    <property type="match status" value="1"/>
</dbReference>
<dbReference type="PROSITE" id="PS51052">
    <property type="entry name" value="CYCLOTIDE"/>
    <property type="match status" value="1"/>
</dbReference>
<dbReference type="PROSITE" id="PS60008">
    <property type="entry name" value="CYCLOTIDE_BRACELET"/>
    <property type="match status" value="1"/>
</dbReference>
<keyword id="KW-0903">Direct protein sequencing</keyword>
<keyword id="KW-1015">Disulfide bond</keyword>
<keyword id="KW-0960">Knottin</keyword>
<keyword id="KW-0611">Plant defense</keyword>
<sequence>GTLPCGESCVWIPCISAAVGCSCKSKVCYKN</sequence>
<accession>P58438</accession>
<organism>
    <name type="scientific">Viola odorata</name>
    <name type="common">Sweet violet</name>
    <dbReference type="NCBI Taxonomy" id="97441"/>
    <lineage>
        <taxon>Eukaryota</taxon>
        <taxon>Viridiplantae</taxon>
        <taxon>Streptophyta</taxon>
        <taxon>Embryophyta</taxon>
        <taxon>Tracheophyta</taxon>
        <taxon>Spermatophyta</taxon>
        <taxon>Magnoliopsida</taxon>
        <taxon>eudicotyledons</taxon>
        <taxon>Gunneridae</taxon>
        <taxon>Pentapetalae</taxon>
        <taxon>rosids</taxon>
        <taxon>fabids</taxon>
        <taxon>Malpighiales</taxon>
        <taxon>Violaceae</taxon>
        <taxon>Viola</taxon>
        <taxon>Viola subgen. Viola</taxon>
        <taxon>Viola sect. Viola</taxon>
        <taxon>Viola subsect. Viola</taxon>
    </lineage>
</organism>
<reference key="1">
    <citation type="journal article" date="1999" name="J. Mol. Biol.">
        <title>Plant cyclotides: a unique family of cyclic and knotted proteins that defines the cyclic cystine knot structural motif.</title>
        <authorList>
            <person name="Craik D.J."/>
            <person name="Daly N.L."/>
            <person name="Bond T."/>
            <person name="Waine C."/>
        </authorList>
    </citation>
    <scope>PROTEIN SEQUENCE</scope>
</reference>
<reference key="2">
    <citation type="journal article" date="2006" name="Biochem. J.">
        <title>A novel suite of cyclotides from Viola odorata: sequence variation and the implications for structure, function and stability.</title>
        <authorList>
            <person name="Ireland D.C."/>
            <person name="Colgrave M.L."/>
            <person name="Craik D.J."/>
        </authorList>
    </citation>
    <scope>PROTEIN SEQUENCE</scope>
    <scope>MASS SPECTROMETRY</scope>
</reference>
<evidence type="ECO:0000255" key="1">
    <source>
        <dbReference type="PROSITE-ProRule" id="PRU00395"/>
    </source>
</evidence>
<evidence type="ECO:0000269" key="2">
    <source>
    </source>
</evidence>
<evidence type="ECO:0000305" key="3"/>
<proteinExistence type="evidence at protein level"/>
<name>CYO6_VIOOD</name>
<protein>
    <recommendedName>
        <fullName>Cycloviolacin-O6</fullName>
    </recommendedName>
</protein>
<comment type="function">
    <text>Probably participates in a plant defense mechanism.</text>
</comment>
<comment type="domain">
    <text>The presence of a 'disulfide through disulfide knot' structurally defines this protein as a knottin.</text>
</comment>
<comment type="PTM">
    <text>This is a cyclic peptide.</text>
</comment>
<comment type="mass spectrometry"/>
<comment type="similarity">
    <text evidence="1">Belongs to the cyclotide family. Bracelet subfamily.</text>
</comment>
<comment type="caution">
    <text evidence="3">This peptide is cyclic. The start position was chosen by similarity to OAK1 (kalata-B1) for which the DNA sequence is known.</text>
</comment>